<dbReference type="EC" id="4.2.1.66" evidence="3"/>
<dbReference type="EMBL" id="KZ293646">
    <property type="protein sequence ID" value="PBL01211.1"/>
    <property type="molecule type" value="Genomic_DNA"/>
</dbReference>
<dbReference type="SMR" id="A0A2H3E4G0"/>
<dbReference type="STRING" id="47427.A0A2H3E4G0"/>
<dbReference type="InParanoid" id="A0A2H3E4G0"/>
<dbReference type="OMA" id="AWLYHET"/>
<dbReference type="OrthoDB" id="10250282at2759"/>
<dbReference type="Proteomes" id="UP000217790">
    <property type="component" value="Unassembled WGS sequence"/>
</dbReference>
<dbReference type="GO" id="GO:0030196">
    <property type="term" value="F:cyanide hydratase activity"/>
    <property type="evidence" value="ECO:0007669"/>
    <property type="project" value="UniProtKB-EC"/>
</dbReference>
<dbReference type="GO" id="GO:0000257">
    <property type="term" value="F:nitrilase activity"/>
    <property type="evidence" value="ECO:0007669"/>
    <property type="project" value="UniProtKB-ARBA"/>
</dbReference>
<dbReference type="CDD" id="cd07564">
    <property type="entry name" value="nitrilases_CHs"/>
    <property type="match status" value="1"/>
</dbReference>
<dbReference type="Gene3D" id="3.60.110.10">
    <property type="entry name" value="Carbon-nitrogen hydrolase"/>
    <property type="match status" value="1"/>
</dbReference>
<dbReference type="InterPro" id="IPR003010">
    <property type="entry name" value="C-N_Hydrolase"/>
</dbReference>
<dbReference type="InterPro" id="IPR036526">
    <property type="entry name" value="C-N_Hydrolase_sf"/>
</dbReference>
<dbReference type="InterPro" id="IPR000132">
    <property type="entry name" value="Nitrilase/CN_hydratase_CS"/>
</dbReference>
<dbReference type="InterPro" id="IPR044149">
    <property type="entry name" value="Nitrilases_CHs"/>
</dbReference>
<dbReference type="PANTHER" id="PTHR46044:SF14">
    <property type="entry name" value="ARYLACETONITRILASE"/>
    <property type="match status" value="1"/>
</dbReference>
<dbReference type="PANTHER" id="PTHR46044">
    <property type="entry name" value="NITRILASE"/>
    <property type="match status" value="1"/>
</dbReference>
<dbReference type="Pfam" id="PF00795">
    <property type="entry name" value="CN_hydrolase"/>
    <property type="match status" value="1"/>
</dbReference>
<dbReference type="SUPFAM" id="SSF56317">
    <property type="entry name" value="Carbon-nitrogen hydrolase"/>
    <property type="match status" value="1"/>
</dbReference>
<dbReference type="PROSITE" id="PS50263">
    <property type="entry name" value="CN_HYDROLASE"/>
    <property type="match status" value="1"/>
</dbReference>
<dbReference type="PROSITE" id="PS00920">
    <property type="entry name" value="NITRIL_CHT_1"/>
    <property type="match status" value="1"/>
</dbReference>
<protein>
    <recommendedName>
        <fullName evidence="4">Cyanide hydratase</fullName>
        <shortName evidence="5">CHT</shortName>
        <ecNumber evidence="3">4.2.1.66</ecNumber>
    </recommendedName>
    <alternativeName>
        <fullName>Cyanide-degrading nitrilase</fullName>
    </alternativeName>
    <alternativeName>
        <fullName>Formamide hydrolyase</fullName>
    </alternativeName>
    <alternativeName>
        <fullName evidence="4">NitAg</fullName>
    </alternativeName>
</protein>
<comment type="function">
    <text evidence="3">Catalyzes the hydration of cyanide to formamide. Degradation of cyanide may be important for plant pathogenic fungi in infection of cyanogenic plants.</text>
</comment>
<comment type="catalytic activity">
    <reaction evidence="3">
        <text>formamide = hydrogen cyanide + H2O</text>
        <dbReference type="Rhea" id="RHEA:21720"/>
        <dbReference type="ChEBI" id="CHEBI:15377"/>
        <dbReference type="ChEBI" id="CHEBI:16397"/>
        <dbReference type="ChEBI" id="CHEBI:18407"/>
        <dbReference type="EC" id="4.2.1.66"/>
    </reaction>
</comment>
<comment type="similarity">
    <text evidence="5">Belongs to the carbon-nitrogen hydrolase superfamily. Nitrilase family.</text>
</comment>
<accession>A0A2H3E4G0</accession>
<feature type="chain" id="PRO_0000451140" description="Cyanide hydratase">
    <location>
        <begin position="1"/>
        <end position="356"/>
    </location>
</feature>
<feature type="domain" description="CN hydrolase" evidence="1">
    <location>
        <begin position="15"/>
        <end position="290"/>
    </location>
</feature>
<feature type="region of interest" description="Disordered" evidence="2">
    <location>
        <begin position="331"/>
        <end position="356"/>
    </location>
</feature>
<feature type="active site" description="Proton acceptor" evidence="1">
    <location>
        <position position="55"/>
    </location>
</feature>
<feature type="active site" evidence="1">
    <location>
        <position position="137"/>
    </location>
</feature>
<feature type="active site" description="Nucleophile" evidence="1">
    <location>
        <position position="172"/>
    </location>
</feature>
<keyword id="KW-0378">Hydrolase</keyword>
<keyword id="KW-0456">Lyase</keyword>
<keyword id="KW-1185">Reference proteome</keyword>
<evidence type="ECO:0000255" key="1">
    <source>
        <dbReference type="PROSITE-ProRule" id="PRU00054"/>
    </source>
</evidence>
<evidence type="ECO:0000256" key="2">
    <source>
        <dbReference type="SAM" id="MobiDB-lite"/>
    </source>
</evidence>
<evidence type="ECO:0000269" key="3">
    <source>
    </source>
</evidence>
<evidence type="ECO:0000303" key="4">
    <source>
    </source>
</evidence>
<evidence type="ECO:0000305" key="5"/>
<organism>
    <name type="scientific">Armillaria gallica</name>
    <name type="common">Bulbous honey fungus</name>
    <name type="synonym">Armillaria bulbosa</name>
    <dbReference type="NCBI Taxonomy" id="47427"/>
    <lineage>
        <taxon>Eukaryota</taxon>
        <taxon>Fungi</taxon>
        <taxon>Dikarya</taxon>
        <taxon>Basidiomycota</taxon>
        <taxon>Agaricomycotina</taxon>
        <taxon>Agaricomycetes</taxon>
        <taxon>Agaricomycetidae</taxon>
        <taxon>Agaricales</taxon>
        <taxon>Marasmiineae</taxon>
        <taxon>Physalacriaceae</taxon>
        <taxon>Armillaria</taxon>
    </lineage>
</organism>
<name>NIT_ARMGA</name>
<reference key="1">
    <citation type="journal article" date="2017" name="Nat. Ecol. Evol.">
        <title>Genome expansion and lineage-specific genetic innovations in the forest pathogenic fungi Armillaria.</title>
        <authorList>
            <person name="Sipos G."/>
            <person name="Prasanna A.N."/>
            <person name="Walter M.C."/>
            <person name="O'Connor E."/>
            <person name="Balint B."/>
            <person name="Krizsan K."/>
            <person name="Kiss B."/>
            <person name="Hess J."/>
            <person name="Varga T."/>
            <person name="Slot J."/>
            <person name="Riley R."/>
            <person name="Boka B."/>
            <person name="Rigling D."/>
            <person name="Barry K."/>
            <person name="Lee J."/>
            <person name="Mihaltcheva S."/>
            <person name="LaButti K."/>
            <person name="Lipzen A."/>
            <person name="Waldron R."/>
            <person name="Moloney N.M."/>
            <person name="Sperisen C."/>
            <person name="Kredics L."/>
            <person name="Vagvoelgyi C."/>
            <person name="Patrignani A."/>
            <person name="Fitzpatrick D."/>
            <person name="Nagy I."/>
            <person name="Doyle S."/>
            <person name="Anderson J.B."/>
            <person name="Grigoriev I.V."/>
            <person name="Gueldener U."/>
            <person name="Muensterkoetter M."/>
            <person name="Nagy L.G."/>
        </authorList>
    </citation>
    <scope>NUCLEOTIDE SEQUENCE [LARGE SCALE GENOMIC DNA]</scope>
    <source>
        <strain>Ar21-2</strain>
    </source>
</reference>
<reference key="2">
    <citation type="journal article" date="2019" name="Int. J. Mol. Sci.">
        <title>Genetic and functional diversity of nitrilases in Agaricomycotina.</title>
        <authorList>
            <person name="Rucka L."/>
            <person name="Chmatal M."/>
            <person name="Kulik N."/>
            <person name="Petraskova L."/>
            <person name="Pelantova H."/>
            <person name="Novotny P."/>
            <person name="Prihodova R."/>
            <person name="Patek M."/>
            <person name="Martinkova L."/>
        </authorList>
    </citation>
    <scope>FUNCTION</scope>
    <scope>CATALYTIC ACTIVITY</scope>
</reference>
<proteinExistence type="evidence at protein level"/>
<gene>
    <name type="ORF">ARMGADRAFT_1007240</name>
</gene>
<sequence length="356" mass="39050">MPISLNPSHSNTQTFKVAAVQAEPVWLDLQGGVEKTIRIINEAAAEGAKIIGFPEVFIPGYPWTPWANNFVDAQVVLKKYQANSMPLHSPEMDRIREAVKEADVNIVLGFSERDGSSLYIAQVTITSDGKIANHRRKIKPTHYEKTIFGDGSAQSIYNVVQTPYGRLGSLNCWEHIQPWLKTHFYSQYPQIFVGGWWPAFPPHTGGSPYIVSGEASSRMSQLVSMEGGLFGIVCCHVVSEAGARKMRMLGFPWFTFPGGGFSVIYGPDGAALTDPVDPGKEVVLYANISLDKIDDVKLVADIMGNYSRFDLFHTTVVNGKNWKPVAYGDPDEQAASKAQQAEIDNAGKGSIVPSKL</sequence>